<dbReference type="EMBL" id="AY672837">
    <property type="status" value="NOT_ANNOTATED_CDS"/>
    <property type="molecule type" value="mRNA"/>
</dbReference>
<dbReference type="EMBL" id="AY672838">
    <property type="status" value="NOT_ANNOTATED_CDS"/>
    <property type="molecule type" value="mRNA"/>
</dbReference>
<dbReference type="EMBL" id="AY672839">
    <property type="status" value="NOT_ANNOTATED_CDS"/>
    <property type="molecule type" value="mRNA"/>
</dbReference>
<dbReference type="EMBL" id="AY134857">
    <property type="protein sequence ID" value="AAN10256.1"/>
    <property type="molecule type" value="mRNA"/>
</dbReference>
<dbReference type="EMBL" id="AK129974">
    <property type="protein sequence ID" value="BAC85264.1"/>
    <property type="molecule type" value="mRNA"/>
</dbReference>
<dbReference type="EMBL" id="BC044240">
    <property type="protein sequence ID" value="AAH44240.1"/>
    <property type="molecule type" value="mRNA"/>
</dbReference>
<dbReference type="CCDS" id="CCDS3008.1">
    <molecule id="Q86SU0-2"/>
</dbReference>
<dbReference type="CCDS" id="CCDS56270.1">
    <molecule id="Q86SU0-5"/>
</dbReference>
<dbReference type="CCDS" id="CCDS56271.1">
    <molecule id="Q86SU0-1"/>
</dbReference>
<dbReference type="RefSeq" id="NP_001186728.1">
    <molecule id="Q86SU0-1"/>
    <property type="nucleotide sequence ID" value="NM_001199799.2"/>
</dbReference>
<dbReference type="RefSeq" id="NP_001186729.1">
    <molecule id="Q86SU0-5"/>
    <property type="nucleotide sequence ID" value="NM_001199800.2"/>
</dbReference>
<dbReference type="RefSeq" id="NP_787120.1">
    <molecule id="Q86SU0-2"/>
    <property type="nucleotide sequence ID" value="NM_175924.4"/>
</dbReference>
<dbReference type="RefSeq" id="XP_005247446.1">
    <molecule id="Q86SU0-6"/>
    <property type="nucleotide sequence ID" value="XM_005247389.5"/>
</dbReference>
<dbReference type="RefSeq" id="XP_054202333.1">
    <molecule id="Q86SU0-6"/>
    <property type="nucleotide sequence ID" value="XM_054346358.1"/>
</dbReference>
<dbReference type="BioGRID" id="130413">
    <property type="interactions" value="10"/>
</dbReference>
<dbReference type="FunCoup" id="Q86SU0">
    <property type="interactions" value="60"/>
</dbReference>
<dbReference type="IntAct" id="Q86SU0">
    <property type="interactions" value="8"/>
</dbReference>
<dbReference type="STRING" id="9606.ENSP00000345667"/>
<dbReference type="GlyGen" id="Q86SU0">
    <property type="glycosylation" value="2 sites, 1 O-linked glycan (2 sites)"/>
</dbReference>
<dbReference type="iPTMnet" id="Q86SU0"/>
<dbReference type="PhosphoSitePlus" id="Q86SU0"/>
<dbReference type="SwissPalm" id="Q86SU0"/>
<dbReference type="BioMuta" id="ILDR1"/>
<dbReference type="DMDM" id="110279019"/>
<dbReference type="jPOST" id="Q86SU0"/>
<dbReference type="MassIVE" id="Q86SU0"/>
<dbReference type="PaxDb" id="9606-ENSP00000345667"/>
<dbReference type="PeptideAtlas" id="Q86SU0"/>
<dbReference type="ProteomicsDB" id="69633">
    <molecule id="Q86SU0-1"/>
</dbReference>
<dbReference type="ProteomicsDB" id="69634">
    <molecule id="Q86SU0-2"/>
</dbReference>
<dbReference type="ProteomicsDB" id="69635">
    <molecule id="Q86SU0-3"/>
</dbReference>
<dbReference type="ProteomicsDB" id="69637">
    <molecule id="Q86SU0-5"/>
</dbReference>
<dbReference type="ProteomicsDB" id="69638">
    <molecule id="Q86SU0-6"/>
</dbReference>
<dbReference type="Antibodypedia" id="3021">
    <property type="antibodies" value="67 antibodies from 14 providers"/>
</dbReference>
<dbReference type="DNASU" id="286676"/>
<dbReference type="Ensembl" id="ENST00000273691.7">
    <molecule id="Q86SU0-2"/>
    <property type="protein sequence ID" value="ENSP00000273691.3"/>
    <property type="gene ID" value="ENSG00000145103.15"/>
</dbReference>
<dbReference type="Ensembl" id="ENST00000344209.10">
    <molecule id="Q86SU0-1"/>
    <property type="protein sequence ID" value="ENSP00000345667.5"/>
    <property type="gene ID" value="ENSG00000145103.15"/>
</dbReference>
<dbReference type="Ensembl" id="ENST00000393631.5">
    <molecule id="Q86SU0-5"/>
    <property type="protein sequence ID" value="ENSP00000377251.1"/>
    <property type="gene ID" value="ENSG00000145103.15"/>
</dbReference>
<dbReference type="Ensembl" id="ENST00000642615.1">
    <molecule id="Q86SU0-3"/>
    <property type="protein sequence ID" value="ENSP00000495499.1"/>
    <property type="gene ID" value="ENSG00000145103.15"/>
</dbReference>
<dbReference type="GeneID" id="286676"/>
<dbReference type="KEGG" id="hsa:286676"/>
<dbReference type="MANE-Select" id="ENST00000344209.10">
    <property type="protein sequence ID" value="ENSP00000345667.5"/>
    <property type="RefSeq nucleotide sequence ID" value="NM_001199799.2"/>
    <property type="RefSeq protein sequence ID" value="NP_001186728.1"/>
</dbReference>
<dbReference type="UCSC" id="uc003eeq.4">
    <molecule id="Q86SU0-1"/>
    <property type="organism name" value="human"/>
</dbReference>
<dbReference type="AGR" id="HGNC:28741"/>
<dbReference type="CTD" id="286676"/>
<dbReference type="DisGeNET" id="286676"/>
<dbReference type="GeneCards" id="ILDR1"/>
<dbReference type="HGNC" id="HGNC:28741">
    <property type="gene designation" value="ILDR1"/>
</dbReference>
<dbReference type="HPA" id="ENSG00000145103">
    <property type="expression patterns" value="Tissue enhanced (parathyroid)"/>
</dbReference>
<dbReference type="MalaCards" id="ILDR1"/>
<dbReference type="MIM" id="609646">
    <property type="type" value="phenotype"/>
</dbReference>
<dbReference type="MIM" id="609739">
    <property type="type" value="gene"/>
</dbReference>
<dbReference type="neXtProt" id="NX_Q86SU0"/>
<dbReference type="OpenTargets" id="ENSG00000145103"/>
<dbReference type="Orphanet" id="90636">
    <property type="disease" value="Rare autosomal recessive non-syndromic sensorineural deafness type DFNB"/>
</dbReference>
<dbReference type="PharmGKB" id="PA134883110"/>
<dbReference type="VEuPathDB" id="HostDB:ENSG00000145103"/>
<dbReference type="eggNOG" id="ENOG502QS11">
    <property type="taxonomic scope" value="Eukaryota"/>
</dbReference>
<dbReference type="GeneTree" id="ENSGT00950000183058"/>
<dbReference type="HOGENOM" id="CLU_037131_1_0_1"/>
<dbReference type="InParanoid" id="Q86SU0"/>
<dbReference type="OMA" id="TRCCCNQ"/>
<dbReference type="OrthoDB" id="9944507at2759"/>
<dbReference type="PAN-GO" id="Q86SU0">
    <property type="GO annotations" value="2 GO annotations based on evolutionary models"/>
</dbReference>
<dbReference type="PhylomeDB" id="Q86SU0"/>
<dbReference type="TreeFam" id="TF330877"/>
<dbReference type="PathwayCommons" id="Q86SU0"/>
<dbReference type="SignaLink" id="Q86SU0"/>
<dbReference type="BioGRID-ORCS" id="286676">
    <property type="hits" value="16 hits in 1142 CRISPR screens"/>
</dbReference>
<dbReference type="GenomeRNAi" id="286676"/>
<dbReference type="Pharos" id="Q86SU0">
    <property type="development level" value="Tbio"/>
</dbReference>
<dbReference type="PRO" id="PR:Q86SU0"/>
<dbReference type="Proteomes" id="UP000005640">
    <property type="component" value="Chromosome 3"/>
</dbReference>
<dbReference type="RNAct" id="Q86SU0">
    <property type="molecule type" value="protein"/>
</dbReference>
<dbReference type="Bgee" id="ENSG00000145103">
    <property type="expression patterns" value="Expressed in corpus epididymis and 103 other cell types or tissues"/>
</dbReference>
<dbReference type="GO" id="GO:0005923">
    <property type="term" value="C:bicellular tight junction"/>
    <property type="evidence" value="ECO:0007669"/>
    <property type="project" value="UniProtKB-SubCell"/>
</dbReference>
<dbReference type="GO" id="GO:0005829">
    <property type="term" value="C:cytosol"/>
    <property type="evidence" value="ECO:0000314"/>
    <property type="project" value="UniProtKB"/>
</dbReference>
<dbReference type="GO" id="GO:0005886">
    <property type="term" value="C:plasma membrane"/>
    <property type="evidence" value="ECO:0000314"/>
    <property type="project" value="UniProtKB"/>
</dbReference>
<dbReference type="GO" id="GO:0032991">
    <property type="term" value="C:protein-containing complex"/>
    <property type="evidence" value="ECO:0000314"/>
    <property type="project" value="UniProtKB"/>
</dbReference>
<dbReference type="GO" id="GO:0070160">
    <property type="term" value="C:tight junction"/>
    <property type="evidence" value="ECO:0000314"/>
    <property type="project" value="UniProtKB"/>
</dbReference>
<dbReference type="GO" id="GO:0061689">
    <property type="term" value="C:tricellular tight junction"/>
    <property type="evidence" value="ECO:0000250"/>
    <property type="project" value="UniProtKB"/>
</dbReference>
<dbReference type="GO" id="GO:0070506">
    <property type="term" value="F:high-density lipoprotein particle receptor activity"/>
    <property type="evidence" value="ECO:0000250"/>
    <property type="project" value="UniProtKB"/>
</dbReference>
<dbReference type="GO" id="GO:0042802">
    <property type="term" value="F:identical protein binding"/>
    <property type="evidence" value="ECO:0000314"/>
    <property type="project" value="UniProtKB"/>
</dbReference>
<dbReference type="GO" id="GO:1990830">
    <property type="term" value="P:cellular response to leukemia inhibitory factor"/>
    <property type="evidence" value="ECO:0007669"/>
    <property type="project" value="Ensembl"/>
</dbReference>
<dbReference type="GO" id="GO:0010669">
    <property type="term" value="P:epithelial structure maintenance"/>
    <property type="evidence" value="ECO:0000250"/>
    <property type="project" value="UniProtKB"/>
</dbReference>
<dbReference type="GO" id="GO:0051649">
    <property type="term" value="P:establishment of localization in cell"/>
    <property type="evidence" value="ECO:0007669"/>
    <property type="project" value="Ensembl"/>
</dbReference>
<dbReference type="GO" id="GO:0030072">
    <property type="term" value="P:peptide hormone secretion"/>
    <property type="evidence" value="ECO:0007669"/>
    <property type="project" value="Ensembl"/>
</dbReference>
<dbReference type="GO" id="GO:0090277">
    <property type="term" value="P:positive regulation of peptide hormone secretion"/>
    <property type="evidence" value="ECO:0000250"/>
    <property type="project" value="UniProtKB"/>
</dbReference>
<dbReference type="GO" id="GO:0061833">
    <property type="term" value="P:protein localization to tricellular tight junction"/>
    <property type="evidence" value="ECO:0000250"/>
    <property type="project" value="UniProtKB"/>
</dbReference>
<dbReference type="GO" id="GO:0043484">
    <property type="term" value="P:regulation of RNA splicing"/>
    <property type="evidence" value="ECO:0000250"/>
    <property type="project" value="UniProtKB"/>
</dbReference>
<dbReference type="GO" id="GO:0070542">
    <property type="term" value="P:response to fatty acid"/>
    <property type="evidence" value="ECO:0000250"/>
    <property type="project" value="UniProtKB"/>
</dbReference>
<dbReference type="GO" id="GO:1904274">
    <property type="term" value="P:tricellular tight junction assembly"/>
    <property type="evidence" value="ECO:0000250"/>
    <property type="project" value="UniProtKB"/>
</dbReference>
<dbReference type="Gene3D" id="2.60.40.10">
    <property type="entry name" value="Immunoglobulins"/>
    <property type="match status" value="1"/>
</dbReference>
<dbReference type="InterPro" id="IPR036179">
    <property type="entry name" value="Ig-like_dom_sf"/>
</dbReference>
<dbReference type="InterPro" id="IPR051874">
    <property type="entry name" value="Ig-like_domain-LISCH7"/>
</dbReference>
<dbReference type="InterPro" id="IPR013783">
    <property type="entry name" value="Ig-like_fold"/>
</dbReference>
<dbReference type="InterPro" id="IPR003599">
    <property type="entry name" value="Ig_sub"/>
</dbReference>
<dbReference type="InterPro" id="IPR008664">
    <property type="entry name" value="LISCH7"/>
</dbReference>
<dbReference type="PANTHER" id="PTHR15923:SF3">
    <property type="entry name" value="IMMUNOGLOBULIN-LIKE DOMAIN-CONTAINING RECEPTOR 1"/>
    <property type="match status" value="1"/>
</dbReference>
<dbReference type="PANTHER" id="PTHR15923">
    <property type="entry name" value="TRANSMEMBRANE AND IMMUNOGLOBULIN DOMAIN-CONTAINING PROTEIN"/>
    <property type="match status" value="1"/>
</dbReference>
<dbReference type="Pfam" id="PF05624">
    <property type="entry name" value="LSR"/>
    <property type="match status" value="1"/>
</dbReference>
<dbReference type="SMART" id="SM00409">
    <property type="entry name" value="IG"/>
    <property type="match status" value="1"/>
</dbReference>
<dbReference type="SUPFAM" id="SSF48726">
    <property type="entry name" value="Immunoglobulin"/>
    <property type="match status" value="1"/>
</dbReference>
<keyword id="KW-0025">Alternative splicing</keyword>
<keyword id="KW-0965">Cell junction</keyword>
<keyword id="KW-1003">Cell membrane</keyword>
<keyword id="KW-0963">Cytoplasm</keyword>
<keyword id="KW-0209">Deafness</keyword>
<keyword id="KW-0225">Disease variant</keyword>
<keyword id="KW-1015">Disulfide bond</keyword>
<keyword id="KW-0393">Immunoglobulin domain</keyword>
<keyword id="KW-0472">Membrane</keyword>
<keyword id="KW-1010">Non-syndromic deafness</keyword>
<keyword id="KW-0597">Phosphoprotein</keyword>
<keyword id="KW-1267">Proteomics identification</keyword>
<keyword id="KW-0675">Receptor</keyword>
<keyword id="KW-1185">Reference proteome</keyword>
<keyword id="KW-0732">Signal</keyword>
<keyword id="KW-0796">Tight junction</keyword>
<keyword id="KW-0812">Transmembrane</keyword>
<keyword id="KW-1133">Transmembrane helix</keyword>
<proteinExistence type="evidence at protein level"/>
<comment type="function">
    <text evidence="2 7">Maintains epithelial barrier function by recruiting MARVELD2/tricellulin to tricellular tight junctions (tTJs) (PubMed:23239027). Crucial for normal hearing by maintaining the structural and functional integrity of tTJs, which are critical for the survival of auditory neurosensory HCs. Mediates fatty acids and lipoproteins-stimulated CCK/cholecystokinin secretion in the small intestine. In the inner ear, may regulate alternative pre-mRNA splicing via binding to TRA2A, TRA2B and SRSF1 (By similarity).</text>
</comment>
<comment type="function">
    <text evidence="9">(Microbial infection) Promotes influenza virus infection by inhibiting viral nucleoprotein NP binding to PLSCR1 and thereby PLSCR1-mediated antiviral activity.</text>
</comment>
<comment type="subunit">
    <text evidence="2 5 7 9">Homooligomer (PubMed:15381095). Interacts with MARVELD2 and OCLN; the interaction is required to recruit MARVELD2 to tricellular contacts (PubMed:23239027). Interacts (via C-terminus) with TRA2A, TRA2B and SRSF1 (By similarity). Interacts with PLSCR1 (PubMed:35595813).</text>
</comment>
<comment type="subcellular location">
    <subcellularLocation>
        <location evidence="5">Cell membrane</location>
        <topology evidence="5">Single-pass type I membrane protein</topology>
    </subcellularLocation>
    <subcellularLocation>
        <location evidence="7">Cell junction</location>
        <location evidence="7">Tight junction</location>
    </subcellularLocation>
    <subcellularLocation>
        <location evidence="9">Cytoplasm</location>
    </subcellularLocation>
</comment>
<comment type="subcellular location">
    <molecule>Isoform 5</molecule>
    <subcellularLocation>
        <location evidence="5">Cytoplasm</location>
        <location evidence="5">Cytosol</location>
    </subcellularLocation>
</comment>
<comment type="alternative products">
    <event type="alternative splicing"/>
    <isoform>
        <id>Q86SU0-1</id>
        <name>1</name>
        <name>Alpha</name>
        <sequence type="displayed"/>
    </isoform>
    <isoform>
        <id>Q86SU0-2</id>
        <name>2</name>
        <sequence type="described" ref="VSP_019683"/>
    </isoform>
    <isoform>
        <id>Q86SU0-3</id>
        <name>3</name>
        <sequence type="described" ref="VSP_019684 VSP_019685"/>
    </isoform>
    <isoform>
        <id>Q86SU0-4</id>
        <name>4</name>
        <sequence type="described" ref="VSP_019680 VSP_019686 VSP_019687"/>
    </isoform>
    <isoform>
        <id>Q86SU0-5</id>
        <name>5</name>
        <name>Beta</name>
        <sequence type="described" ref="VSP_019681 VSP_019682"/>
    </isoform>
    <isoform>
        <id>Q86SU0-6</id>
        <name>6</name>
        <name>Alpha'</name>
        <sequence type="described" ref="VSP_019679 VSP_019683"/>
    </isoform>
</comment>
<comment type="tissue specificity">
    <text evidence="5">Mainly expressed in prostate and to a lower extent in testis, pancreas, kidney, heart and liver.</text>
</comment>
<comment type="disease" evidence="6 7">
    <disease id="DI-03029">
        <name>Deafness, autosomal recessive, 42</name>
        <acronym>DFNB42</acronym>
        <description>A prelingual, non-progressive form of non-syndromic sensorineural hearing loss. Sensorineural deafness results from damage to the neural receptors of the inner ear, the nerve pathways to the brain, or the area of the brain that receives sound information.</description>
        <dbReference type="MIM" id="609646"/>
    </disease>
    <text>The disease is caused by variants affecting the gene represented in this entry.</text>
</comment>
<comment type="similarity">
    <text evidence="15">Belongs to the immunoglobulin superfamily. LISCH7 family.</text>
</comment>
<organism>
    <name type="scientific">Homo sapiens</name>
    <name type="common">Human</name>
    <dbReference type="NCBI Taxonomy" id="9606"/>
    <lineage>
        <taxon>Eukaryota</taxon>
        <taxon>Metazoa</taxon>
        <taxon>Chordata</taxon>
        <taxon>Craniata</taxon>
        <taxon>Vertebrata</taxon>
        <taxon>Euteleostomi</taxon>
        <taxon>Mammalia</taxon>
        <taxon>Eutheria</taxon>
        <taxon>Euarchontoglires</taxon>
        <taxon>Primates</taxon>
        <taxon>Haplorrhini</taxon>
        <taxon>Catarrhini</taxon>
        <taxon>Hominidae</taxon>
        <taxon>Homo</taxon>
    </lineage>
</organism>
<gene>
    <name evidence="16" type="primary">ILDR1</name>
</gene>
<name>ILDR1_HUMAN</name>
<sequence>MAWPKLPAPWLLLCTWLPAGCLSLLVTVQHTERYVTLFASIILKCDYTTSAQLQDVVVTWRFKSFCKDPIFDYYSASYQAALSLGQDPSNDCNDNQREVRIVAQRRGQNEPVLGVDYRQRKITIQNRADLVINEVMWWDHGVYYCTIEAPGDTSGDPDKEVKLIVLHWLTVIFIILGALLLLLLIGVCWCQCCPQYCCCYIRCPCCPAHCCCPEEALARHRYMKQAQALGPQMMGKPLYWGADRSSQVSSYPMHPLLQRDLSLPSSLPQMPMTQTTNQPPIANGVLEYLEKELRNLNLAQPLPPDLKGRFGHPCSMLSSLGSEVVERRIIHLPPLIRDLSSSRRTSDSLHQQWLTPIPSRPWDLREGRSHHHYPDFHQELQDRGPKSWALERRELDPSWSGRHRSSRLNGSPIHWSDRDSLSDVPSSSEARWRPSHPPFRSRCQERPRRPSPRESTQRHGRRRRHRSYSPPLPSGLSSWSSEEDKERQPQSWRAHRRGSHSPHWPEEKPPSYRSLDITPGKNSRKKGSVERRSEKDSSHSGRSVVI</sequence>
<reference key="1">
    <citation type="journal article" date="2004" name="Biochem. Biophys. Res. Commun.">
        <title>Characterization of a novel immunoglobulin-like domain containing receptor.</title>
        <authorList>
            <person name="Hauge H."/>
            <person name="Patzke S."/>
            <person name="Delabie J."/>
            <person name="Aasheim H.-C."/>
        </authorList>
    </citation>
    <scope>NUCLEOTIDE SEQUENCE [MRNA] (ISOFORMS 1; 5 AND 6)</scope>
    <scope>TOPOLOGY</scope>
    <scope>SUBCELLULAR LOCATION</scope>
    <scope>TISSUE SPECIFICITY</scope>
    <scope>SUBUNIT</scope>
    <source>
        <tissue>Lymphoma</tissue>
        <tissue>Prostate</tissue>
    </source>
</reference>
<reference key="2">
    <citation type="submission" date="2002-07" db="EMBL/GenBank/DDBJ databases">
        <authorList>
            <person name="Guo J.H."/>
            <person name="Yu L."/>
        </authorList>
    </citation>
    <scope>NUCLEOTIDE SEQUENCE [LARGE SCALE MRNA] (ISOFORM 3)</scope>
    <source>
        <tissue>Kidney</tissue>
    </source>
</reference>
<reference key="3">
    <citation type="journal article" date="2004" name="Nat. Genet.">
        <title>Complete sequencing and characterization of 21,243 full-length human cDNAs.</title>
        <authorList>
            <person name="Ota T."/>
            <person name="Suzuki Y."/>
            <person name="Nishikawa T."/>
            <person name="Otsuki T."/>
            <person name="Sugiyama T."/>
            <person name="Irie R."/>
            <person name="Wakamatsu A."/>
            <person name="Hayashi K."/>
            <person name="Sato H."/>
            <person name="Nagai K."/>
            <person name="Kimura K."/>
            <person name="Makita H."/>
            <person name="Sekine M."/>
            <person name="Obayashi M."/>
            <person name="Nishi T."/>
            <person name="Shibahara T."/>
            <person name="Tanaka T."/>
            <person name="Ishii S."/>
            <person name="Yamamoto J."/>
            <person name="Saito K."/>
            <person name="Kawai Y."/>
            <person name="Isono Y."/>
            <person name="Nakamura Y."/>
            <person name="Nagahari K."/>
            <person name="Murakami K."/>
            <person name="Yasuda T."/>
            <person name="Iwayanagi T."/>
            <person name="Wagatsuma M."/>
            <person name="Shiratori A."/>
            <person name="Sudo H."/>
            <person name="Hosoiri T."/>
            <person name="Kaku Y."/>
            <person name="Kodaira H."/>
            <person name="Kondo H."/>
            <person name="Sugawara M."/>
            <person name="Takahashi M."/>
            <person name="Kanda K."/>
            <person name="Yokoi T."/>
            <person name="Furuya T."/>
            <person name="Kikkawa E."/>
            <person name="Omura Y."/>
            <person name="Abe K."/>
            <person name="Kamihara K."/>
            <person name="Katsuta N."/>
            <person name="Sato K."/>
            <person name="Tanikawa M."/>
            <person name="Yamazaki M."/>
            <person name="Ninomiya K."/>
            <person name="Ishibashi T."/>
            <person name="Yamashita H."/>
            <person name="Murakawa K."/>
            <person name="Fujimori K."/>
            <person name="Tanai H."/>
            <person name="Kimata M."/>
            <person name="Watanabe M."/>
            <person name="Hiraoka S."/>
            <person name="Chiba Y."/>
            <person name="Ishida S."/>
            <person name="Ono Y."/>
            <person name="Takiguchi S."/>
            <person name="Watanabe S."/>
            <person name="Yosida M."/>
            <person name="Hotuta T."/>
            <person name="Kusano J."/>
            <person name="Kanehori K."/>
            <person name="Takahashi-Fujii A."/>
            <person name="Hara H."/>
            <person name="Tanase T.-O."/>
            <person name="Nomura Y."/>
            <person name="Togiya S."/>
            <person name="Komai F."/>
            <person name="Hara R."/>
            <person name="Takeuchi K."/>
            <person name="Arita M."/>
            <person name="Imose N."/>
            <person name="Musashino K."/>
            <person name="Yuuki H."/>
            <person name="Oshima A."/>
            <person name="Sasaki N."/>
            <person name="Aotsuka S."/>
            <person name="Yoshikawa Y."/>
            <person name="Matsunawa H."/>
            <person name="Ichihara T."/>
            <person name="Shiohata N."/>
            <person name="Sano S."/>
            <person name="Moriya S."/>
            <person name="Momiyama H."/>
            <person name="Satoh N."/>
            <person name="Takami S."/>
            <person name="Terashima Y."/>
            <person name="Suzuki O."/>
            <person name="Nakagawa S."/>
            <person name="Senoh A."/>
            <person name="Mizoguchi H."/>
            <person name="Goto Y."/>
            <person name="Shimizu F."/>
            <person name="Wakebe H."/>
            <person name="Hishigaki H."/>
            <person name="Watanabe T."/>
            <person name="Sugiyama A."/>
            <person name="Takemoto M."/>
            <person name="Kawakami B."/>
            <person name="Yamazaki M."/>
            <person name="Watanabe K."/>
            <person name="Kumagai A."/>
            <person name="Itakura S."/>
            <person name="Fukuzumi Y."/>
            <person name="Fujimori Y."/>
            <person name="Komiyama M."/>
            <person name="Tashiro H."/>
            <person name="Tanigami A."/>
            <person name="Fujiwara T."/>
            <person name="Ono T."/>
            <person name="Yamada K."/>
            <person name="Fujii Y."/>
            <person name="Ozaki K."/>
            <person name="Hirao M."/>
            <person name="Ohmori Y."/>
            <person name="Kawabata A."/>
            <person name="Hikiji T."/>
            <person name="Kobatake N."/>
            <person name="Inagaki H."/>
            <person name="Ikema Y."/>
            <person name="Okamoto S."/>
            <person name="Okitani R."/>
            <person name="Kawakami T."/>
            <person name="Noguchi S."/>
            <person name="Itoh T."/>
            <person name="Shigeta K."/>
            <person name="Senba T."/>
            <person name="Matsumura K."/>
            <person name="Nakajima Y."/>
            <person name="Mizuno T."/>
            <person name="Morinaga M."/>
            <person name="Sasaki M."/>
            <person name="Togashi T."/>
            <person name="Oyama M."/>
            <person name="Hata H."/>
            <person name="Watanabe M."/>
            <person name="Komatsu T."/>
            <person name="Mizushima-Sugano J."/>
            <person name="Satoh T."/>
            <person name="Shirai Y."/>
            <person name="Takahashi Y."/>
            <person name="Nakagawa K."/>
            <person name="Okumura K."/>
            <person name="Nagase T."/>
            <person name="Nomura N."/>
            <person name="Kikuchi H."/>
            <person name="Masuho Y."/>
            <person name="Yamashita R."/>
            <person name="Nakai K."/>
            <person name="Yada T."/>
            <person name="Nakamura Y."/>
            <person name="Ohara O."/>
            <person name="Isogai T."/>
            <person name="Sugano S."/>
        </authorList>
    </citation>
    <scope>NUCLEOTIDE SEQUENCE [LARGE SCALE MRNA] (ISOFORM 4)</scope>
    <source>
        <tissue>Kidney</tissue>
    </source>
</reference>
<reference key="4">
    <citation type="journal article" date="2004" name="Genome Res.">
        <title>The status, quality, and expansion of the NIH full-length cDNA project: the Mammalian Gene Collection (MGC).</title>
        <authorList>
            <consortium name="The MGC Project Team"/>
        </authorList>
    </citation>
    <scope>NUCLEOTIDE SEQUENCE [LARGE SCALE MRNA] (ISOFORM 2)</scope>
    <source>
        <tissue>Brain</tissue>
    </source>
</reference>
<reference key="5">
    <citation type="journal article" date="2022" name="Sci. Rep.">
        <title>ILDR1 promotes influenza A virus replication through binding to PLSCR1.</title>
        <authorList>
            <person name="Liu Y."/>
            <person name="Lin S."/>
            <person name="Xie Y."/>
            <person name="Zhao L."/>
            <person name="Du H."/>
            <person name="Yang S."/>
            <person name="Yin B."/>
            <person name="Li G."/>
            <person name="Zhao Z."/>
            <person name="Huang Z."/>
            <person name="Xu Z."/>
            <person name="Wu J."/>
        </authorList>
    </citation>
    <scope>INTERACTION WITH PLSCR1</scope>
    <scope>SUBCELLULAR LOCATION</scope>
    <scope>FUNCTION (MICROBIAL INFECTION)</scope>
</reference>
<reference key="6">
    <citation type="journal article" date="2011" name="Am. J. Hum. Genet.">
        <title>Loss-of-function mutations of ILDR1 cause autosomal-recessive hearing impairment DFNB42.</title>
        <authorList>
            <person name="Borck G."/>
            <person name="Ur Rehman A."/>
            <person name="Lee K."/>
            <person name="Pogoda H.M."/>
            <person name="Kakar N."/>
            <person name="von Ameln S."/>
            <person name="Grillet N."/>
            <person name="Hildebrand M.S."/>
            <person name="Ahmed Z.M."/>
            <person name="Nurnberg G."/>
            <person name="Ansar M."/>
            <person name="Basit S."/>
            <person name="Javed Q."/>
            <person name="Morell R.J."/>
            <person name="Nasreen N."/>
            <person name="Shearer A.E."/>
            <person name="Ahmad A."/>
            <person name="Kahrizi K."/>
            <person name="Shaikh R.S."/>
            <person name="Ali R.A."/>
            <person name="Khan S.N."/>
            <person name="Goebel I."/>
            <person name="Meyer N.C."/>
            <person name="Kimberling W.J."/>
            <person name="Webster J.A."/>
            <person name="Stephan D.A."/>
            <person name="Schiller M.R."/>
            <person name="Bahlo M."/>
            <person name="Najmabadi H."/>
            <person name="Gillespie P.G."/>
            <person name="Nurnberg P."/>
            <person name="Wollnik B."/>
            <person name="Riazuddin S."/>
            <person name="Smith R.J."/>
            <person name="Ahmad W."/>
            <person name="Muller U."/>
            <person name="Hammerschmidt M."/>
            <person name="Friedman T.B."/>
            <person name="Riazuddin S."/>
            <person name="Leal S.M."/>
            <person name="Ahmad J."/>
            <person name="Kubisch C."/>
        </authorList>
    </citation>
    <scope>VARIANTS DFNB42 GLN-97; 195-GLN--ILE-546 DEL; 379-GLU--ILE-546 DEL AND GLN-453</scope>
    <scope>VARIANT CYS-463</scope>
</reference>
<reference key="7">
    <citation type="journal article" date="2013" name="J. Cell Sci.">
        <title>Analysis of the 'angulin' proteins LSR, ILDR1 and ILDR2--tricellulin recruitment, epithelial barrier function and implication in deafness pathogenesis.</title>
        <authorList>
            <person name="Higashi T."/>
            <person name="Tokuda S."/>
            <person name="Kitajiri S."/>
            <person name="Masuda S."/>
            <person name="Nakamura H."/>
            <person name="Oda Y."/>
            <person name="Furuse M."/>
        </authorList>
    </citation>
    <scope>CHARACTERIZATION OF VARIANTS DFNB42 GLN-97; 195-GLN--ILE-546 DEL; 379-GLU--ILE-546 DEL AND GLN-453</scope>
    <scope>FUNCTION</scope>
    <scope>SUBCELLULAR LOCATION</scope>
    <scope>INTERACTION WITH MARVELD2 AND OCLN</scope>
</reference>
<reference key="8">
    <citation type="journal article" date="2017" name="Hum. Mutat.">
        <title>Mutations in KARS cause early-onset hearing loss and leukoencephalopathy: Potential pathogenic mechanism.</title>
        <authorList>
            <person name="Zhou X.L."/>
            <person name="He L.X."/>
            <person name="Yu L.J."/>
            <person name="Wang Y."/>
            <person name="Wang X.J."/>
            <person name="Wang E.D."/>
            <person name="Yang T."/>
        </authorList>
    </citation>
    <scope>VARIANT VAL-357</scope>
</reference>
<evidence type="ECO:0000250" key="1"/>
<evidence type="ECO:0000250" key="2">
    <source>
        <dbReference type="UniProtKB" id="Q8CBR1"/>
    </source>
</evidence>
<evidence type="ECO:0000255" key="3"/>
<evidence type="ECO:0000256" key="4">
    <source>
        <dbReference type="SAM" id="MobiDB-lite"/>
    </source>
</evidence>
<evidence type="ECO:0000269" key="5">
    <source>
    </source>
</evidence>
<evidence type="ECO:0000269" key="6">
    <source>
    </source>
</evidence>
<evidence type="ECO:0000269" key="7">
    <source>
    </source>
</evidence>
<evidence type="ECO:0000269" key="8">
    <source>
    </source>
</evidence>
<evidence type="ECO:0000269" key="9">
    <source>
    </source>
</evidence>
<evidence type="ECO:0000303" key="10">
    <source>
    </source>
</evidence>
<evidence type="ECO:0000303" key="11">
    <source>
    </source>
</evidence>
<evidence type="ECO:0000303" key="12">
    <source>
    </source>
</evidence>
<evidence type="ECO:0000303" key="13">
    <source>
    </source>
</evidence>
<evidence type="ECO:0000303" key="14">
    <source ref="2"/>
</evidence>
<evidence type="ECO:0000305" key="15"/>
<evidence type="ECO:0000312" key="16">
    <source>
        <dbReference type="HGNC" id="HGNC:28741"/>
    </source>
</evidence>
<protein>
    <recommendedName>
        <fullName evidence="15">Immunoglobulin-like domain-containing receptor 1</fullName>
    </recommendedName>
    <alternativeName>
        <fullName evidence="13">Angulin-2</fullName>
    </alternativeName>
</protein>
<feature type="signal peptide" evidence="3">
    <location>
        <begin position="1"/>
        <end position="23"/>
    </location>
</feature>
<feature type="chain" id="PRO_0000245304" description="Immunoglobulin-like domain-containing receptor 1">
    <location>
        <begin position="24"/>
        <end position="546"/>
    </location>
</feature>
<feature type="topological domain" description="Extracellular" evidence="3">
    <location>
        <begin position="24"/>
        <end position="167"/>
    </location>
</feature>
<feature type="transmembrane region" description="Helical" evidence="3">
    <location>
        <begin position="168"/>
        <end position="188"/>
    </location>
</feature>
<feature type="topological domain" description="Cytoplasmic" evidence="3">
    <location>
        <begin position="189"/>
        <end position="546"/>
    </location>
</feature>
<feature type="domain" description="Ig-like V-type">
    <location>
        <begin position="24"/>
        <end position="162"/>
    </location>
</feature>
<feature type="region of interest" description="Disordered" evidence="4">
    <location>
        <begin position="399"/>
        <end position="546"/>
    </location>
</feature>
<feature type="compositionally biased region" description="Basic and acidic residues" evidence="4">
    <location>
        <begin position="442"/>
        <end position="457"/>
    </location>
</feature>
<feature type="compositionally biased region" description="Basic residues" evidence="4">
    <location>
        <begin position="458"/>
        <end position="467"/>
    </location>
</feature>
<feature type="compositionally biased region" description="Basic and acidic residues" evidence="4">
    <location>
        <begin position="527"/>
        <end position="539"/>
    </location>
</feature>
<feature type="modified residue" description="Phosphoserine" evidence="2">
    <location>
        <position position="499"/>
    </location>
</feature>
<feature type="modified residue" description="Phosphoserine" evidence="2">
    <location>
        <position position="501"/>
    </location>
</feature>
<feature type="disulfide bond" evidence="1">
    <location>
        <begin position="45"/>
        <end position="145"/>
    </location>
</feature>
<feature type="splice variant" id="VSP_019679" description="In isoform 6." evidence="11">
    <original>MAWPKLPAPWLLLCTWLPA</original>
    <variation>MAGNIFCPFALFFLPMSRVGHLQHFLLLLAL</variation>
    <location>
        <begin position="1"/>
        <end position="19"/>
    </location>
</feature>
<feature type="splice variant" id="VSP_019680" description="In isoform 4." evidence="10">
    <location>
        <begin position="92"/>
        <end position="209"/>
    </location>
</feature>
<feature type="splice variant" id="VSP_019681" description="In isoform 5." evidence="11">
    <original>R</original>
    <variation>P</variation>
    <location>
        <position position="127"/>
    </location>
</feature>
<feature type="splice variant" id="VSP_019682" description="In isoform 5." evidence="11">
    <location>
        <begin position="128"/>
        <end position="216"/>
    </location>
</feature>
<feature type="splice variant" id="VSP_019683" description="In isoform 2 and isoform 6." evidence="11 12">
    <location>
        <begin position="216"/>
        <end position="259"/>
    </location>
</feature>
<feature type="splice variant" id="VSP_019684" description="In isoform 3." evidence="14">
    <original>DLSLPS</original>
    <variation>ASRRCQ</variation>
    <location>
        <begin position="260"/>
        <end position="265"/>
    </location>
</feature>
<feature type="splice variant" id="VSP_019685" description="In isoform 3." evidence="14">
    <location>
        <begin position="266"/>
        <end position="546"/>
    </location>
</feature>
<feature type="splice variant" id="VSP_019686" description="In isoform 4." evidence="10">
    <original>VVERRI</original>
    <variation>NQIEEF</variation>
    <location>
        <begin position="324"/>
        <end position="329"/>
    </location>
</feature>
<feature type="splice variant" id="VSP_019687" description="In isoform 4." evidence="10">
    <location>
        <begin position="330"/>
        <end position="546"/>
    </location>
</feature>
<feature type="sequence variant" id="VAR_065352" description="In DFNB42; no effect on interaction with MARVELD2; loss of tight junction location; dbSNP:rs771818841." evidence="6">
    <original>R</original>
    <variation>Q</variation>
    <location>
        <position position="97"/>
    </location>
</feature>
<feature type="sequence variant" id="VAR_085556" description="In DFNB42; loss of interaction with MARVELD2; loss of tight junction location." evidence="6">
    <location>
        <begin position="195"/>
        <end position="546"/>
    </location>
</feature>
<feature type="sequence variant" id="VAR_079750" description="In dbSNP:rs1448131970." evidence="8">
    <original>I</original>
    <variation>V</variation>
    <location>
        <position position="357"/>
    </location>
</feature>
<feature type="sequence variant" id="VAR_085557" description="In DFNB42; no effect on interaction with MARVELD2; loss of tight junction location." evidence="6">
    <location>
        <begin position="379"/>
        <end position="546"/>
    </location>
</feature>
<feature type="sequence variant" id="VAR_065353" description="In DFNB42; uncertain significance; no effect on interaction with MARVELD2; no effect on tight junction location; dbSNP:rs372564314." evidence="6">
    <original>R</original>
    <variation>Q</variation>
    <location>
        <position position="453"/>
    </location>
</feature>
<feature type="sequence variant" id="VAR_065354" description="In dbSNP:rs778163752." evidence="6">
    <original>R</original>
    <variation>C</variation>
    <location>
        <position position="463"/>
    </location>
</feature>
<accession>Q86SU0</accession>
<accession>Q6ZP61</accession>
<accession>Q7Z578</accession>